<dbReference type="EC" id="2.1.1.-"/>
<dbReference type="EMBL" id="AF170880">
    <property type="protein sequence ID" value="AAF67514.2"/>
    <property type="molecule type" value="Genomic_DNA"/>
</dbReference>
<dbReference type="RefSeq" id="WP_069626149.1">
    <property type="nucleotide sequence ID" value="NZ_JBFBIX010000004.1"/>
</dbReference>
<dbReference type="SMR" id="Q9L9E7"/>
<dbReference type="KEGG" id="ag:AAF67514"/>
<dbReference type="BioCyc" id="MetaCyc:MONOMER-18089"/>
<dbReference type="UniPathway" id="UPA01035"/>
<dbReference type="GO" id="GO:0008757">
    <property type="term" value="F:S-adenosylmethionine-dependent methyltransferase activity"/>
    <property type="evidence" value="ECO:0000314"/>
    <property type="project" value="UniProtKB"/>
</dbReference>
<dbReference type="GO" id="GO:0032259">
    <property type="term" value="P:methylation"/>
    <property type="evidence" value="ECO:0000314"/>
    <property type="project" value="UniProtKB"/>
</dbReference>
<dbReference type="GO" id="GO:0043642">
    <property type="term" value="P:novobiocin biosynthetic process"/>
    <property type="evidence" value="ECO:0000314"/>
    <property type="project" value="UniProtKB"/>
</dbReference>
<dbReference type="Gene3D" id="6.10.250.3100">
    <property type="match status" value="1"/>
</dbReference>
<dbReference type="Gene3D" id="6.20.50.110">
    <property type="entry name" value="Methyltransferase, zinc-binding domain"/>
    <property type="match status" value="1"/>
</dbReference>
<dbReference type="Gene3D" id="3.40.50.720">
    <property type="entry name" value="NAD(P)-binding Rossmann-like Domain"/>
    <property type="match status" value="1"/>
</dbReference>
<dbReference type="Gene3D" id="3.40.50.150">
    <property type="entry name" value="Vaccinia Virus protein VP39"/>
    <property type="match status" value="1"/>
</dbReference>
<dbReference type="InterPro" id="IPR013630">
    <property type="entry name" value="Methyltransf_Zn-bd_dom_put"/>
</dbReference>
<dbReference type="InterPro" id="IPR038576">
    <property type="entry name" value="Methyltransf_Zn-bd_dom_put_sf"/>
</dbReference>
<dbReference type="InterPro" id="IPR013691">
    <property type="entry name" value="MeTrfase_14"/>
</dbReference>
<dbReference type="InterPro" id="IPR029063">
    <property type="entry name" value="SAM-dependent_MTases_sf"/>
</dbReference>
<dbReference type="PANTHER" id="PTHR43861:SF5">
    <property type="entry name" value="BLL5978 PROTEIN"/>
    <property type="match status" value="1"/>
</dbReference>
<dbReference type="PANTHER" id="PTHR43861">
    <property type="entry name" value="TRANS-ACONITATE 2-METHYLTRANSFERASE-RELATED"/>
    <property type="match status" value="1"/>
</dbReference>
<dbReference type="Pfam" id="PF08421">
    <property type="entry name" value="Methyltransf_13"/>
    <property type="match status" value="1"/>
</dbReference>
<dbReference type="Pfam" id="PF08484">
    <property type="entry name" value="Methyltransf_14"/>
    <property type="match status" value="1"/>
</dbReference>
<dbReference type="Pfam" id="PF13489">
    <property type="entry name" value="Methyltransf_23"/>
    <property type="match status" value="1"/>
</dbReference>
<dbReference type="SUPFAM" id="SSF53335">
    <property type="entry name" value="S-adenosyl-L-methionine-dependent methyltransferases"/>
    <property type="match status" value="1"/>
</dbReference>
<proteinExistence type="inferred from homology"/>
<feature type="chain" id="PRO_0000424005" description="C-methyltransferase NovU">
    <location>
        <begin position="1"/>
        <end position="420"/>
    </location>
</feature>
<protein>
    <recommendedName>
        <fullName>C-methyltransferase NovU</fullName>
        <ecNumber>2.1.1.-</ecNumber>
    </recommendedName>
    <alternativeName>
        <fullName>Novobiocin biosynthesis protein U</fullName>
    </alternativeName>
</protein>
<name>NOVU_STRNV</name>
<organism>
    <name type="scientific">Streptomyces niveus</name>
    <name type="common">Streptomyces spheroides</name>
    <dbReference type="NCBI Taxonomy" id="193462"/>
    <lineage>
        <taxon>Bacteria</taxon>
        <taxon>Bacillati</taxon>
        <taxon>Actinomycetota</taxon>
        <taxon>Actinomycetes</taxon>
        <taxon>Kitasatosporales</taxon>
        <taxon>Streptomycetaceae</taxon>
        <taxon>Streptomyces</taxon>
    </lineage>
</organism>
<accession>Q9L9E7</accession>
<sequence>MQDIVRPIDECRVCGHDDWLDVVSFGSTPLAGNLLGDEDDAGGETLFPLDVVVCRRCWLMTLRHVIEPDVLFGHYRYVASDAGSIIQHMRKLVDLCVERIGLTDGDLVVEFGSNTGAHLELFRQAGPRVVGVDPARNLAGVANDRGVETIPAGFTAEVGEEIATRHGLARLVYGRQCFAHIPDIHEVLNGVSALLAPDGLFFVEVPYLVELLKNNQFDTIFHEHFSYFSLGSLCTLFESHGLRVVDVHTADVHGGSIVVFAAPAAADHEVRPAVAEMLAEERSQGIAEERTYREFADRTERVRAQIRELVRGVVADGKTVAGYGAPTKGSALLAACGLGHQEIRFCSDTTVLKQGKILPGSRIPIWSPEQAAGHVPDYYLLLAWNYAPEIIDNEKEFLENGGRFIVPIPEPRVISAESTL</sequence>
<comment type="function">
    <text evidence="1">C-methyltransferase that acts together with NovW to catalyze the formation of dTDP-4-keto-6-deoxy-5-C-methyl-L-lyxo-hexose from dTDP-4-keto-6-deoxy-D-glucose in the novobiocin biosynthesis pathway, an aminocoumarin family antibiotic that targets bacterial DNA gyrases.</text>
</comment>
<comment type="pathway">
    <text evidence="1 2">Antibiotic biosynthesis; novobiocin biosynthesis.</text>
</comment>
<comment type="miscellaneous">
    <text evidence="4">It is unclear whether NovU acts before or after 3-epimerase NovW in the novobiocin biosynthesis pathway.</text>
</comment>
<comment type="similarity">
    <text evidence="3">Belongs to the methyltransferase superfamily.</text>
</comment>
<evidence type="ECO:0000269" key="1">
    <source>
    </source>
</evidence>
<evidence type="ECO:0000269" key="2">
    <source>
    </source>
</evidence>
<evidence type="ECO:0000305" key="3"/>
<evidence type="ECO:0000305" key="4">
    <source>
    </source>
</evidence>
<keyword id="KW-0045">Antibiotic biosynthesis</keyword>
<keyword id="KW-0489">Methyltransferase</keyword>
<keyword id="KW-0949">S-adenosyl-L-methionine</keyword>
<keyword id="KW-0808">Transferase</keyword>
<gene>
    <name type="primary">novU</name>
</gene>
<reference key="1">
    <citation type="journal article" date="2000" name="Antimicrob. Agents Chemother.">
        <title>Identification of the novobiocin biosynthetic gene cluster of Streptomyces spheroides NCIB 11891.</title>
        <authorList>
            <person name="Steffensky M."/>
            <person name="Muhlenweg A."/>
            <person name="Wang Z.X."/>
            <person name="Li S.M."/>
            <person name="Heide L."/>
        </authorList>
    </citation>
    <scope>NUCLEOTIDE SEQUENCE [GENOMIC DNA]</scope>
    <source>
        <strain>ATCC 23965 / DSM 40292 / JCM 4252 / NBRC 12917 / NCIMB 11891 / NRRL 2449</strain>
    </source>
</reference>
<reference key="2">
    <citation type="journal article" date="2005" name="Arch. Biochem. Biophys.">
        <title>Functional characterizations of novWUS involved in novobiocin biosynthesis from Streptomyces spheroides.</title>
        <authorList>
            <person name="Thuy T.T."/>
            <person name="Lee H.C."/>
            <person name="Kim C.G."/>
            <person name="Heide L."/>
            <person name="Sohng J.K."/>
        </authorList>
    </citation>
    <scope>FUNCTION</scope>
    <scope>PATHWAY</scope>
    <source>
        <strain>ATCC 23965 / DSM 40292 / JCM 4252 / NBRC 12917 / NCIMB 11891 / NRRL 2449</strain>
    </source>
</reference>
<reference key="3">
    <citation type="journal article" date="2006" name="Chem. Commun. (Camb.)">
        <title>Characterisation of Streptomyces spheroides NovW and revision of its functional assignment to a dTDP-6-deoxy-D-xylo-4-hexulose 3-epimerase.</title>
        <authorList>
            <person name="Tello M."/>
            <person name="Jakimowicz P."/>
            <person name="Errey J.C."/>
            <person name="Freel Meyers C.L."/>
            <person name="Walsh C.T."/>
            <person name="Buttner M.J."/>
            <person name="Lawson D.M."/>
            <person name="Field R.A."/>
        </authorList>
    </citation>
    <scope>PATHWAY</scope>
    <source>
        <strain>ATCC 23965 / DSM 40292 / JCM 4252 / NBRC 12917 / NCIMB 11891 / NRRL 2449</strain>
    </source>
</reference>